<proteinExistence type="inferred from homology"/>
<name>ISPH_NAUPA</name>
<accession>B9L9K5</accession>
<organism>
    <name type="scientific">Nautilia profundicola (strain ATCC BAA-1463 / DSM 18972 / AmH)</name>
    <dbReference type="NCBI Taxonomy" id="598659"/>
    <lineage>
        <taxon>Bacteria</taxon>
        <taxon>Pseudomonadati</taxon>
        <taxon>Campylobacterota</taxon>
        <taxon>Epsilonproteobacteria</taxon>
        <taxon>Nautiliales</taxon>
        <taxon>Nautiliaceae</taxon>
        <taxon>Nautilia</taxon>
    </lineage>
</organism>
<protein>
    <recommendedName>
        <fullName evidence="1">4-hydroxy-3-methylbut-2-enyl diphosphate reductase</fullName>
        <shortName evidence="1">HMBPP reductase</shortName>
        <ecNumber evidence="1">1.17.7.4</ecNumber>
    </recommendedName>
</protein>
<comment type="function">
    <text evidence="1">Catalyzes the conversion of 1-hydroxy-2-methyl-2-(E)-butenyl 4-diphosphate (HMBPP) into a mixture of isopentenyl diphosphate (IPP) and dimethylallyl diphosphate (DMAPP). Acts in the terminal step of the DOXP/MEP pathway for isoprenoid precursor biosynthesis.</text>
</comment>
<comment type="catalytic activity">
    <reaction evidence="1">
        <text>isopentenyl diphosphate + 2 oxidized [2Fe-2S]-[ferredoxin] + H2O = (2E)-4-hydroxy-3-methylbut-2-enyl diphosphate + 2 reduced [2Fe-2S]-[ferredoxin] + 2 H(+)</text>
        <dbReference type="Rhea" id="RHEA:24488"/>
        <dbReference type="Rhea" id="RHEA-COMP:10000"/>
        <dbReference type="Rhea" id="RHEA-COMP:10001"/>
        <dbReference type="ChEBI" id="CHEBI:15377"/>
        <dbReference type="ChEBI" id="CHEBI:15378"/>
        <dbReference type="ChEBI" id="CHEBI:33737"/>
        <dbReference type="ChEBI" id="CHEBI:33738"/>
        <dbReference type="ChEBI" id="CHEBI:128753"/>
        <dbReference type="ChEBI" id="CHEBI:128769"/>
        <dbReference type="EC" id="1.17.7.4"/>
    </reaction>
</comment>
<comment type="catalytic activity">
    <reaction evidence="1">
        <text>dimethylallyl diphosphate + 2 oxidized [2Fe-2S]-[ferredoxin] + H2O = (2E)-4-hydroxy-3-methylbut-2-enyl diphosphate + 2 reduced [2Fe-2S]-[ferredoxin] + 2 H(+)</text>
        <dbReference type="Rhea" id="RHEA:24825"/>
        <dbReference type="Rhea" id="RHEA-COMP:10000"/>
        <dbReference type="Rhea" id="RHEA-COMP:10001"/>
        <dbReference type="ChEBI" id="CHEBI:15377"/>
        <dbReference type="ChEBI" id="CHEBI:15378"/>
        <dbReference type="ChEBI" id="CHEBI:33737"/>
        <dbReference type="ChEBI" id="CHEBI:33738"/>
        <dbReference type="ChEBI" id="CHEBI:57623"/>
        <dbReference type="ChEBI" id="CHEBI:128753"/>
        <dbReference type="EC" id="1.17.7.4"/>
    </reaction>
</comment>
<comment type="cofactor">
    <cofactor evidence="1">
        <name>[4Fe-4S] cluster</name>
        <dbReference type="ChEBI" id="CHEBI:49883"/>
    </cofactor>
    <text evidence="1">Binds 1 [4Fe-4S] cluster per subunit.</text>
</comment>
<comment type="pathway">
    <text evidence="1">Isoprenoid biosynthesis; dimethylallyl diphosphate biosynthesis; dimethylallyl diphosphate from (2E)-4-hydroxy-3-methylbutenyl diphosphate: step 1/1.</text>
</comment>
<comment type="pathway">
    <text evidence="1">Isoprenoid biosynthesis; isopentenyl diphosphate biosynthesis via DXP pathway; isopentenyl diphosphate from 1-deoxy-D-xylulose 5-phosphate: step 6/6.</text>
</comment>
<comment type="similarity">
    <text evidence="1">Belongs to the IspH family.</text>
</comment>
<keyword id="KW-0004">4Fe-4S</keyword>
<keyword id="KW-0408">Iron</keyword>
<keyword id="KW-0411">Iron-sulfur</keyword>
<keyword id="KW-0414">Isoprene biosynthesis</keyword>
<keyword id="KW-0479">Metal-binding</keyword>
<keyword id="KW-0560">Oxidoreductase</keyword>
<dbReference type="EC" id="1.17.7.4" evidence="1"/>
<dbReference type="EMBL" id="CP001279">
    <property type="protein sequence ID" value="ACM93588.1"/>
    <property type="molecule type" value="Genomic_DNA"/>
</dbReference>
<dbReference type="RefSeq" id="WP_015902640.1">
    <property type="nucleotide sequence ID" value="NC_012115.1"/>
</dbReference>
<dbReference type="SMR" id="B9L9K5"/>
<dbReference type="STRING" id="598659.NAMH_0910"/>
<dbReference type="KEGG" id="nam:NAMH_0910"/>
<dbReference type="eggNOG" id="COG0761">
    <property type="taxonomic scope" value="Bacteria"/>
</dbReference>
<dbReference type="HOGENOM" id="CLU_027486_0_1_7"/>
<dbReference type="OrthoDB" id="9804068at2"/>
<dbReference type="UniPathway" id="UPA00056">
    <property type="reaction ID" value="UER00097"/>
</dbReference>
<dbReference type="UniPathway" id="UPA00059">
    <property type="reaction ID" value="UER00105"/>
</dbReference>
<dbReference type="Proteomes" id="UP000000448">
    <property type="component" value="Chromosome"/>
</dbReference>
<dbReference type="GO" id="GO:0051539">
    <property type="term" value="F:4 iron, 4 sulfur cluster binding"/>
    <property type="evidence" value="ECO:0007669"/>
    <property type="project" value="UniProtKB-UniRule"/>
</dbReference>
<dbReference type="GO" id="GO:0051745">
    <property type="term" value="F:4-hydroxy-3-methylbut-2-enyl diphosphate reductase activity"/>
    <property type="evidence" value="ECO:0007669"/>
    <property type="project" value="UniProtKB-UniRule"/>
</dbReference>
<dbReference type="GO" id="GO:0046872">
    <property type="term" value="F:metal ion binding"/>
    <property type="evidence" value="ECO:0007669"/>
    <property type="project" value="UniProtKB-KW"/>
</dbReference>
<dbReference type="GO" id="GO:0050992">
    <property type="term" value="P:dimethylallyl diphosphate biosynthetic process"/>
    <property type="evidence" value="ECO:0007669"/>
    <property type="project" value="UniProtKB-UniRule"/>
</dbReference>
<dbReference type="GO" id="GO:0019288">
    <property type="term" value="P:isopentenyl diphosphate biosynthetic process, methylerythritol 4-phosphate pathway"/>
    <property type="evidence" value="ECO:0007669"/>
    <property type="project" value="UniProtKB-UniRule"/>
</dbReference>
<dbReference type="GO" id="GO:0016114">
    <property type="term" value="P:terpenoid biosynthetic process"/>
    <property type="evidence" value="ECO:0007669"/>
    <property type="project" value="UniProtKB-UniRule"/>
</dbReference>
<dbReference type="CDD" id="cd13944">
    <property type="entry name" value="lytB_ispH"/>
    <property type="match status" value="1"/>
</dbReference>
<dbReference type="Gene3D" id="3.40.50.11270">
    <property type="match status" value="1"/>
</dbReference>
<dbReference type="Gene3D" id="3.40.1010.20">
    <property type="entry name" value="4-hydroxy-3-methylbut-2-enyl diphosphate reductase, catalytic domain"/>
    <property type="match status" value="2"/>
</dbReference>
<dbReference type="HAMAP" id="MF_00191">
    <property type="entry name" value="IspH"/>
    <property type="match status" value="1"/>
</dbReference>
<dbReference type="InterPro" id="IPR003451">
    <property type="entry name" value="LytB/IspH"/>
</dbReference>
<dbReference type="NCBIfam" id="TIGR00216">
    <property type="entry name" value="ispH_lytB"/>
    <property type="match status" value="1"/>
</dbReference>
<dbReference type="NCBIfam" id="NF002187">
    <property type="entry name" value="PRK01045.1-1"/>
    <property type="match status" value="1"/>
</dbReference>
<dbReference type="PANTHER" id="PTHR30426">
    <property type="entry name" value="4-HYDROXY-3-METHYLBUT-2-ENYL DIPHOSPHATE REDUCTASE"/>
    <property type="match status" value="1"/>
</dbReference>
<dbReference type="PANTHER" id="PTHR30426:SF0">
    <property type="entry name" value="4-HYDROXY-3-METHYLBUT-2-ENYL DIPHOSPHATE REDUCTASE"/>
    <property type="match status" value="1"/>
</dbReference>
<dbReference type="Pfam" id="PF02401">
    <property type="entry name" value="LYTB"/>
    <property type="match status" value="1"/>
</dbReference>
<sequence>MIIEKAKSYGFCFGVKRAVEIAEESQNAVTLGPLIHNPLEIERLAKNYNVKYVETIEDIDENVKRVIVRTHGIPKDKLQNLKEKNVEIIDATCPFVKKPQEIVEEMSKQGYDIVIFGDKNHPEIQGVMSYSVHNRVYVVLDPKELEGIRLKEHIATVAQTTRKINDYLKITNYLIQNYKEVRVFNTICNATFENQDAVRELAKKADIMIIIGGKNSSNTKQLYNIAKEFCEAYLVESEEELKKEWFEGKKHCGISAGASTPEWLVEKIISRIKELA</sequence>
<reference key="1">
    <citation type="journal article" date="2009" name="PLoS Genet.">
        <title>Adaptations to submarine hydrothermal environments exemplified by the genome of Nautilia profundicola.</title>
        <authorList>
            <person name="Campbell B.J."/>
            <person name="Smith J.L."/>
            <person name="Hanson T.E."/>
            <person name="Klotz M.G."/>
            <person name="Stein L.Y."/>
            <person name="Lee C.K."/>
            <person name="Wu D."/>
            <person name="Robinson J.M."/>
            <person name="Khouri H.M."/>
            <person name="Eisen J.A."/>
            <person name="Cary S.C."/>
        </authorList>
    </citation>
    <scope>NUCLEOTIDE SEQUENCE [LARGE SCALE GENOMIC DNA]</scope>
    <source>
        <strain>ATCC BAA-1463 / DSM 18972 / AmH</strain>
    </source>
</reference>
<feature type="chain" id="PRO_1000124290" description="4-hydroxy-3-methylbut-2-enyl diphosphate reductase">
    <location>
        <begin position="1"/>
        <end position="276"/>
    </location>
</feature>
<feature type="active site" description="Proton donor" evidence="1">
    <location>
        <position position="123"/>
    </location>
</feature>
<feature type="binding site" evidence="1">
    <location>
        <position position="12"/>
    </location>
    <ligand>
        <name>[4Fe-4S] cluster</name>
        <dbReference type="ChEBI" id="CHEBI:49883"/>
    </ligand>
</feature>
<feature type="binding site" evidence="1">
    <location>
        <position position="36"/>
    </location>
    <ligand>
        <name>(2E)-4-hydroxy-3-methylbut-2-enyl diphosphate</name>
        <dbReference type="ChEBI" id="CHEBI:128753"/>
    </ligand>
</feature>
<feature type="binding site" evidence="1">
    <location>
        <position position="36"/>
    </location>
    <ligand>
        <name>dimethylallyl diphosphate</name>
        <dbReference type="ChEBI" id="CHEBI:57623"/>
    </ligand>
</feature>
<feature type="binding site" evidence="1">
    <location>
        <position position="36"/>
    </location>
    <ligand>
        <name>isopentenyl diphosphate</name>
        <dbReference type="ChEBI" id="CHEBI:128769"/>
    </ligand>
</feature>
<feature type="binding site" evidence="1">
    <location>
        <position position="71"/>
    </location>
    <ligand>
        <name>(2E)-4-hydroxy-3-methylbut-2-enyl diphosphate</name>
        <dbReference type="ChEBI" id="CHEBI:128753"/>
    </ligand>
</feature>
<feature type="binding site" evidence="1">
    <location>
        <position position="71"/>
    </location>
    <ligand>
        <name>dimethylallyl diphosphate</name>
        <dbReference type="ChEBI" id="CHEBI:57623"/>
    </ligand>
</feature>
<feature type="binding site" evidence="1">
    <location>
        <position position="71"/>
    </location>
    <ligand>
        <name>isopentenyl diphosphate</name>
        <dbReference type="ChEBI" id="CHEBI:128769"/>
    </ligand>
</feature>
<feature type="binding site" evidence="1">
    <location>
        <position position="93"/>
    </location>
    <ligand>
        <name>[4Fe-4S] cluster</name>
        <dbReference type="ChEBI" id="CHEBI:49883"/>
    </ligand>
</feature>
<feature type="binding site" evidence="1">
    <location>
        <position position="121"/>
    </location>
    <ligand>
        <name>(2E)-4-hydroxy-3-methylbut-2-enyl diphosphate</name>
        <dbReference type="ChEBI" id="CHEBI:128753"/>
    </ligand>
</feature>
<feature type="binding site" evidence="1">
    <location>
        <position position="121"/>
    </location>
    <ligand>
        <name>dimethylallyl diphosphate</name>
        <dbReference type="ChEBI" id="CHEBI:57623"/>
    </ligand>
</feature>
<feature type="binding site" evidence="1">
    <location>
        <position position="121"/>
    </location>
    <ligand>
        <name>isopentenyl diphosphate</name>
        <dbReference type="ChEBI" id="CHEBI:128769"/>
    </ligand>
</feature>
<feature type="binding site" evidence="1">
    <location>
        <position position="160"/>
    </location>
    <ligand>
        <name>(2E)-4-hydroxy-3-methylbut-2-enyl diphosphate</name>
        <dbReference type="ChEBI" id="CHEBI:128753"/>
    </ligand>
</feature>
<feature type="binding site" evidence="1">
    <location>
        <position position="188"/>
    </location>
    <ligand>
        <name>[4Fe-4S] cluster</name>
        <dbReference type="ChEBI" id="CHEBI:49883"/>
    </ligand>
</feature>
<feature type="binding site" evidence="1">
    <location>
        <position position="216"/>
    </location>
    <ligand>
        <name>(2E)-4-hydroxy-3-methylbut-2-enyl diphosphate</name>
        <dbReference type="ChEBI" id="CHEBI:128753"/>
    </ligand>
</feature>
<feature type="binding site" evidence="1">
    <location>
        <position position="216"/>
    </location>
    <ligand>
        <name>dimethylallyl diphosphate</name>
        <dbReference type="ChEBI" id="CHEBI:57623"/>
    </ligand>
</feature>
<feature type="binding site" evidence="1">
    <location>
        <position position="216"/>
    </location>
    <ligand>
        <name>isopentenyl diphosphate</name>
        <dbReference type="ChEBI" id="CHEBI:128769"/>
    </ligand>
</feature>
<feature type="binding site" evidence="1">
    <location>
        <position position="217"/>
    </location>
    <ligand>
        <name>(2E)-4-hydroxy-3-methylbut-2-enyl diphosphate</name>
        <dbReference type="ChEBI" id="CHEBI:128753"/>
    </ligand>
</feature>
<feature type="binding site" evidence="1">
    <location>
        <position position="217"/>
    </location>
    <ligand>
        <name>dimethylallyl diphosphate</name>
        <dbReference type="ChEBI" id="CHEBI:57623"/>
    </ligand>
</feature>
<feature type="binding site" evidence="1">
    <location>
        <position position="217"/>
    </location>
    <ligand>
        <name>isopentenyl diphosphate</name>
        <dbReference type="ChEBI" id="CHEBI:128769"/>
    </ligand>
</feature>
<feature type="binding site" evidence="1">
    <location>
        <position position="218"/>
    </location>
    <ligand>
        <name>(2E)-4-hydroxy-3-methylbut-2-enyl diphosphate</name>
        <dbReference type="ChEBI" id="CHEBI:128753"/>
    </ligand>
</feature>
<feature type="binding site" evidence="1">
    <location>
        <position position="218"/>
    </location>
    <ligand>
        <name>dimethylallyl diphosphate</name>
        <dbReference type="ChEBI" id="CHEBI:57623"/>
    </ligand>
</feature>
<feature type="binding site" evidence="1">
    <location>
        <position position="218"/>
    </location>
    <ligand>
        <name>isopentenyl diphosphate</name>
        <dbReference type="ChEBI" id="CHEBI:128769"/>
    </ligand>
</feature>
<feature type="binding site" evidence="1">
    <location>
        <position position="259"/>
    </location>
    <ligand>
        <name>(2E)-4-hydroxy-3-methylbut-2-enyl diphosphate</name>
        <dbReference type="ChEBI" id="CHEBI:128753"/>
    </ligand>
</feature>
<feature type="binding site" evidence="1">
    <location>
        <position position="259"/>
    </location>
    <ligand>
        <name>dimethylallyl diphosphate</name>
        <dbReference type="ChEBI" id="CHEBI:57623"/>
    </ligand>
</feature>
<feature type="binding site" evidence="1">
    <location>
        <position position="259"/>
    </location>
    <ligand>
        <name>isopentenyl diphosphate</name>
        <dbReference type="ChEBI" id="CHEBI:128769"/>
    </ligand>
</feature>
<gene>
    <name evidence="1" type="primary">ispH</name>
    <name type="ordered locus">NAMH_0910</name>
</gene>
<evidence type="ECO:0000255" key="1">
    <source>
        <dbReference type="HAMAP-Rule" id="MF_00191"/>
    </source>
</evidence>